<gene>
    <name type="primary">pxr1</name>
    <name type="ORF">NFIA_024640</name>
</gene>
<evidence type="ECO:0000250" key="1"/>
<evidence type="ECO:0000255" key="2">
    <source>
        <dbReference type="PROSITE-ProRule" id="PRU00092"/>
    </source>
</evidence>
<evidence type="ECO:0000256" key="3">
    <source>
        <dbReference type="SAM" id="MobiDB-lite"/>
    </source>
</evidence>
<evidence type="ECO:0000305" key="4"/>
<comment type="function">
    <text evidence="1">Involved in rRNA-processing at A0, A1 and A2 sites and negatively regulates telomerase.</text>
</comment>
<comment type="subcellular location">
    <subcellularLocation>
        <location evidence="1">Nucleus</location>
        <location evidence="1">Nucleolus</location>
    </subcellularLocation>
</comment>
<comment type="similarity">
    <text evidence="4">Belongs to the PINX1 family.</text>
</comment>
<sequence length="307" mass="34033">MGLAAPRKKTKISHDPNNTSWSRSTDGFGHRILKAQGWTPGGFLGARNATHSDLFTTASASHIRVVLKDDTLGLGARPKRNLLDGPTGLDAFKGLLGRLNGKSDTQLEAEQQKRDDAKLARYAATKWQTVRFISGGLLVQEKDNATASPASQDLRVDFPRETSSHESENGMFKMEPMDSDSQEGGCATAKEEEGKKKEKKKKNKKGKELDMSSRKSREKKQEKRQKKRKISDCDGLDAETANRTSTNVLVAVANDKGTCLLASNGPATSRERQPMGRRIFRSRHIEQKKRALMDDKSLNEVFIILSH</sequence>
<proteinExistence type="inferred from homology"/>
<reference key="1">
    <citation type="journal article" date="2008" name="PLoS Genet.">
        <title>Genomic islands in the pathogenic filamentous fungus Aspergillus fumigatus.</title>
        <authorList>
            <person name="Fedorova N.D."/>
            <person name="Khaldi N."/>
            <person name="Joardar V.S."/>
            <person name="Maiti R."/>
            <person name="Amedeo P."/>
            <person name="Anderson M.J."/>
            <person name="Crabtree J."/>
            <person name="Silva J.C."/>
            <person name="Badger J.H."/>
            <person name="Albarraq A."/>
            <person name="Angiuoli S."/>
            <person name="Bussey H."/>
            <person name="Bowyer P."/>
            <person name="Cotty P.J."/>
            <person name="Dyer P.S."/>
            <person name="Egan A."/>
            <person name="Galens K."/>
            <person name="Fraser-Liggett C.M."/>
            <person name="Haas B.J."/>
            <person name="Inman J.M."/>
            <person name="Kent R."/>
            <person name="Lemieux S."/>
            <person name="Malavazi I."/>
            <person name="Orvis J."/>
            <person name="Roemer T."/>
            <person name="Ronning C.M."/>
            <person name="Sundaram J.P."/>
            <person name="Sutton G."/>
            <person name="Turner G."/>
            <person name="Venter J.C."/>
            <person name="White O.R."/>
            <person name="Whitty B.R."/>
            <person name="Youngman P."/>
            <person name="Wolfe K.H."/>
            <person name="Goldman G.H."/>
            <person name="Wortman J.R."/>
            <person name="Jiang B."/>
            <person name="Denning D.W."/>
            <person name="Nierman W.C."/>
        </authorList>
    </citation>
    <scope>NUCLEOTIDE SEQUENCE [LARGE SCALE GENOMIC DNA]</scope>
    <source>
        <strain>ATCC 1020 / DSM 3700 / CBS 544.65 / FGSC A1164 / JCM 1740 / NRRL 181 / WB 181</strain>
    </source>
</reference>
<accession>A1DC33</accession>
<dbReference type="EMBL" id="DS027695">
    <property type="protein sequence ID" value="EAW19393.1"/>
    <property type="molecule type" value="Genomic_DNA"/>
</dbReference>
<dbReference type="RefSeq" id="XP_001261290.1">
    <property type="nucleotide sequence ID" value="XM_001261289.1"/>
</dbReference>
<dbReference type="STRING" id="331117.A1DC33"/>
<dbReference type="EnsemblFungi" id="EAW19393">
    <property type="protein sequence ID" value="EAW19393"/>
    <property type="gene ID" value="NFIA_024640"/>
</dbReference>
<dbReference type="GeneID" id="4588053"/>
<dbReference type="KEGG" id="nfi:NFIA_024640"/>
<dbReference type="VEuPathDB" id="FungiDB:NFIA_024640"/>
<dbReference type="eggNOG" id="KOG2809">
    <property type="taxonomic scope" value="Eukaryota"/>
</dbReference>
<dbReference type="HOGENOM" id="CLU_052839_0_0_1"/>
<dbReference type="OMA" id="ATKWHTV"/>
<dbReference type="OrthoDB" id="264532at2759"/>
<dbReference type="Proteomes" id="UP000006702">
    <property type="component" value="Unassembled WGS sequence"/>
</dbReference>
<dbReference type="GO" id="GO:0005730">
    <property type="term" value="C:nucleolus"/>
    <property type="evidence" value="ECO:0007669"/>
    <property type="project" value="UniProtKB-SubCell"/>
</dbReference>
<dbReference type="GO" id="GO:0003676">
    <property type="term" value="F:nucleic acid binding"/>
    <property type="evidence" value="ECO:0007669"/>
    <property type="project" value="InterPro"/>
</dbReference>
<dbReference type="GO" id="GO:0006364">
    <property type="term" value="P:rRNA processing"/>
    <property type="evidence" value="ECO:0007669"/>
    <property type="project" value="UniProtKB-KW"/>
</dbReference>
<dbReference type="InterPro" id="IPR000467">
    <property type="entry name" value="G_patch_dom"/>
</dbReference>
<dbReference type="InterPro" id="IPR050656">
    <property type="entry name" value="PINX1"/>
</dbReference>
<dbReference type="PANTHER" id="PTHR23149">
    <property type="entry name" value="G PATCH DOMAIN CONTAINING PROTEIN"/>
    <property type="match status" value="1"/>
</dbReference>
<dbReference type="PANTHER" id="PTHR23149:SF31">
    <property type="entry name" value="PROTEIN PXR1"/>
    <property type="match status" value="1"/>
</dbReference>
<dbReference type="PROSITE" id="PS50174">
    <property type="entry name" value="G_PATCH"/>
    <property type="match status" value="1"/>
</dbReference>
<keyword id="KW-0539">Nucleus</keyword>
<keyword id="KW-1185">Reference proteome</keyword>
<keyword id="KW-0690">Ribosome biogenesis</keyword>
<keyword id="KW-0698">rRNA processing</keyword>
<feature type="chain" id="PRO_0000324892" description="Protein pxr1">
    <location>
        <begin position="1"/>
        <end position="307"/>
    </location>
</feature>
<feature type="domain" description="G-patch" evidence="2">
    <location>
        <begin position="25"/>
        <end position="79"/>
    </location>
</feature>
<feature type="region of interest" description="Disordered" evidence="3">
    <location>
        <begin position="1"/>
        <end position="25"/>
    </location>
</feature>
<feature type="region of interest" description="Disordered" evidence="3">
    <location>
        <begin position="144"/>
        <end position="234"/>
    </location>
</feature>
<feature type="compositionally biased region" description="Basic residues" evidence="3">
    <location>
        <begin position="1"/>
        <end position="11"/>
    </location>
</feature>
<feature type="compositionally biased region" description="Polar residues" evidence="3">
    <location>
        <begin position="15"/>
        <end position="25"/>
    </location>
</feature>
<feature type="compositionally biased region" description="Basic and acidic residues" evidence="3">
    <location>
        <begin position="154"/>
        <end position="168"/>
    </location>
</feature>
<feature type="compositionally biased region" description="Basic and acidic residues" evidence="3">
    <location>
        <begin position="206"/>
        <end position="221"/>
    </location>
</feature>
<protein>
    <recommendedName>
        <fullName>Protein pxr1</fullName>
    </recommendedName>
    <alternativeName>
        <fullName>PinX1-related protein 1</fullName>
    </alternativeName>
</protein>
<name>PXR1_NEOFI</name>
<organism>
    <name type="scientific">Neosartorya fischeri (strain ATCC 1020 / DSM 3700 / CBS 544.65 / FGSC A1164 / JCM 1740 / NRRL 181 / WB 181)</name>
    <name type="common">Aspergillus fischerianus</name>
    <dbReference type="NCBI Taxonomy" id="331117"/>
    <lineage>
        <taxon>Eukaryota</taxon>
        <taxon>Fungi</taxon>
        <taxon>Dikarya</taxon>
        <taxon>Ascomycota</taxon>
        <taxon>Pezizomycotina</taxon>
        <taxon>Eurotiomycetes</taxon>
        <taxon>Eurotiomycetidae</taxon>
        <taxon>Eurotiales</taxon>
        <taxon>Aspergillaceae</taxon>
        <taxon>Aspergillus</taxon>
        <taxon>Aspergillus subgen. Fumigati</taxon>
    </lineage>
</organism>